<sequence>MNETILVKIITPLSIAFEKQAKMVTMPGEEGMFGVLPNHAPMIVSLKAGLVQVYIDDIYNPQITYLVSSGVTEVTGSYVNIATETAINVTNLNEAEIATKLLELQKPLSEQH</sequence>
<name>ATPE_RICFE</name>
<comment type="function">
    <text evidence="1">Produces ATP from ADP in the presence of a proton gradient across the membrane.</text>
</comment>
<comment type="subunit">
    <text>F-type ATPases have 2 components, CF(1) - the catalytic core - and CF(0) - the membrane proton channel. CF(1) has five subunits: alpha(3), beta(3), gamma(1), delta(1), epsilon(1). CF(0) has three main subunits: a, b and c.</text>
</comment>
<comment type="subcellular location">
    <subcellularLocation>
        <location evidence="1">Cell inner membrane</location>
        <topology evidence="1">Peripheral membrane protein</topology>
    </subcellularLocation>
</comment>
<comment type="similarity">
    <text evidence="1">Belongs to the ATPase epsilon chain family.</text>
</comment>
<reference key="1">
    <citation type="journal article" date="2005" name="PLoS Biol.">
        <title>The genome sequence of Rickettsia felis identifies the first putative conjugative plasmid in an obligate intracellular parasite.</title>
        <authorList>
            <person name="Ogata H."/>
            <person name="Renesto P."/>
            <person name="Audic S."/>
            <person name="Robert C."/>
            <person name="Blanc G."/>
            <person name="Fournier P.-E."/>
            <person name="Parinello H."/>
            <person name="Claverie J.-M."/>
            <person name="Raoult D."/>
        </authorList>
    </citation>
    <scope>NUCLEOTIDE SEQUENCE [LARGE SCALE GENOMIC DNA]</scope>
    <source>
        <strain>ATCC VR-1525 / URRWXCal2</strain>
    </source>
</reference>
<feature type="chain" id="PRO_0000265881" description="ATP synthase epsilon chain">
    <location>
        <begin position="1"/>
        <end position="112"/>
    </location>
</feature>
<evidence type="ECO:0000255" key="1">
    <source>
        <dbReference type="HAMAP-Rule" id="MF_00530"/>
    </source>
</evidence>
<protein>
    <recommendedName>
        <fullName evidence="1">ATP synthase epsilon chain</fullName>
    </recommendedName>
    <alternativeName>
        <fullName evidence="1">ATP synthase F1 sector epsilon subunit</fullName>
    </alternativeName>
    <alternativeName>
        <fullName evidence="1">F-ATPase epsilon subunit</fullName>
    </alternativeName>
</protein>
<keyword id="KW-0066">ATP synthesis</keyword>
<keyword id="KW-0997">Cell inner membrane</keyword>
<keyword id="KW-1003">Cell membrane</keyword>
<keyword id="KW-0139">CF(1)</keyword>
<keyword id="KW-0375">Hydrogen ion transport</keyword>
<keyword id="KW-0406">Ion transport</keyword>
<keyword id="KW-0472">Membrane</keyword>
<keyword id="KW-0813">Transport</keyword>
<accession>Q4UK19</accession>
<proteinExistence type="inferred from homology"/>
<dbReference type="EMBL" id="CP000053">
    <property type="protein sequence ID" value="AAY62116.1"/>
    <property type="molecule type" value="Genomic_DNA"/>
</dbReference>
<dbReference type="SMR" id="Q4UK19"/>
<dbReference type="STRING" id="315456.RF_1265"/>
<dbReference type="KEGG" id="rfe:RF_1265"/>
<dbReference type="eggNOG" id="COG0355">
    <property type="taxonomic scope" value="Bacteria"/>
</dbReference>
<dbReference type="HOGENOM" id="CLU_084338_2_1_5"/>
<dbReference type="OrthoDB" id="9799969at2"/>
<dbReference type="Proteomes" id="UP000008548">
    <property type="component" value="Chromosome"/>
</dbReference>
<dbReference type="GO" id="GO:0005886">
    <property type="term" value="C:plasma membrane"/>
    <property type="evidence" value="ECO:0007669"/>
    <property type="project" value="UniProtKB-SubCell"/>
</dbReference>
<dbReference type="GO" id="GO:0045259">
    <property type="term" value="C:proton-transporting ATP synthase complex"/>
    <property type="evidence" value="ECO:0007669"/>
    <property type="project" value="UniProtKB-KW"/>
</dbReference>
<dbReference type="GO" id="GO:0005524">
    <property type="term" value="F:ATP binding"/>
    <property type="evidence" value="ECO:0007669"/>
    <property type="project" value="UniProtKB-UniRule"/>
</dbReference>
<dbReference type="GO" id="GO:0046933">
    <property type="term" value="F:proton-transporting ATP synthase activity, rotational mechanism"/>
    <property type="evidence" value="ECO:0007669"/>
    <property type="project" value="UniProtKB-UniRule"/>
</dbReference>
<dbReference type="CDD" id="cd12152">
    <property type="entry name" value="F1-ATPase_delta"/>
    <property type="match status" value="1"/>
</dbReference>
<dbReference type="Gene3D" id="2.60.15.10">
    <property type="entry name" value="F0F1 ATP synthase delta/epsilon subunit, N-terminal"/>
    <property type="match status" value="1"/>
</dbReference>
<dbReference type="HAMAP" id="MF_00530">
    <property type="entry name" value="ATP_synth_epsil_bac"/>
    <property type="match status" value="1"/>
</dbReference>
<dbReference type="InterPro" id="IPR001469">
    <property type="entry name" value="ATP_synth_F1_dsu/esu"/>
</dbReference>
<dbReference type="InterPro" id="IPR020546">
    <property type="entry name" value="ATP_synth_F1_dsu/esu_N"/>
</dbReference>
<dbReference type="InterPro" id="IPR036771">
    <property type="entry name" value="ATPsynth_dsu/esu_N"/>
</dbReference>
<dbReference type="NCBIfam" id="TIGR01216">
    <property type="entry name" value="ATP_synt_epsi"/>
    <property type="match status" value="1"/>
</dbReference>
<dbReference type="NCBIfam" id="NF002403">
    <property type="entry name" value="PRK01474.1"/>
    <property type="match status" value="1"/>
</dbReference>
<dbReference type="PANTHER" id="PTHR13822">
    <property type="entry name" value="ATP SYNTHASE DELTA/EPSILON CHAIN"/>
    <property type="match status" value="1"/>
</dbReference>
<dbReference type="PANTHER" id="PTHR13822:SF10">
    <property type="entry name" value="ATP SYNTHASE EPSILON CHAIN, CHLOROPLASTIC"/>
    <property type="match status" value="1"/>
</dbReference>
<dbReference type="Pfam" id="PF02823">
    <property type="entry name" value="ATP-synt_DE_N"/>
    <property type="match status" value="1"/>
</dbReference>
<dbReference type="SUPFAM" id="SSF51344">
    <property type="entry name" value="Epsilon subunit of F1F0-ATP synthase N-terminal domain"/>
    <property type="match status" value="1"/>
</dbReference>
<organism>
    <name type="scientific">Rickettsia felis (strain ATCC VR-1525 / URRWXCal2)</name>
    <name type="common">Rickettsia azadi</name>
    <dbReference type="NCBI Taxonomy" id="315456"/>
    <lineage>
        <taxon>Bacteria</taxon>
        <taxon>Pseudomonadati</taxon>
        <taxon>Pseudomonadota</taxon>
        <taxon>Alphaproteobacteria</taxon>
        <taxon>Rickettsiales</taxon>
        <taxon>Rickettsiaceae</taxon>
        <taxon>Rickettsieae</taxon>
        <taxon>Rickettsia</taxon>
        <taxon>spotted fever group</taxon>
    </lineage>
</organism>
<gene>
    <name evidence="1" type="primary">atpC</name>
    <name type="ordered locus">RF_1265</name>
</gene>